<evidence type="ECO:0000255" key="1">
    <source>
        <dbReference type="HAMAP-Rule" id="MF_00101"/>
    </source>
</evidence>
<feature type="chain" id="PRO_0000175648" description="Holo-[acyl-carrier-protein] synthase">
    <location>
        <begin position="1"/>
        <end position="126"/>
    </location>
</feature>
<feature type="binding site" evidence="1">
    <location>
        <position position="9"/>
    </location>
    <ligand>
        <name>Mg(2+)</name>
        <dbReference type="ChEBI" id="CHEBI:18420"/>
    </ligand>
</feature>
<feature type="binding site" evidence="1">
    <location>
        <position position="58"/>
    </location>
    <ligand>
        <name>Mg(2+)</name>
        <dbReference type="ChEBI" id="CHEBI:18420"/>
    </ligand>
</feature>
<keyword id="KW-0963">Cytoplasm</keyword>
<keyword id="KW-0275">Fatty acid biosynthesis</keyword>
<keyword id="KW-0276">Fatty acid metabolism</keyword>
<keyword id="KW-0444">Lipid biosynthesis</keyword>
<keyword id="KW-0443">Lipid metabolism</keyword>
<keyword id="KW-0460">Magnesium</keyword>
<keyword id="KW-0479">Metal-binding</keyword>
<keyword id="KW-1185">Reference proteome</keyword>
<keyword id="KW-0808">Transferase</keyword>
<accession>Q6D222</accession>
<reference key="1">
    <citation type="journal article" date="2004" name="Proc. Natl. Acad. Sci. U.S.A.">
        <title>Genome sequence of the enterobacterial phytopathogen Erwinia carotovora subsp. atroseptica and characterization of virulence factors.</title>
        <authorList>
            <person name="Bell K.S."/>
            <person name="Sebaihia M."/>
            <person name="Pritchard L."/>
            <person name="Holden M.T.G."/>
            <person name="Hyman L.J."/>
            <person name="Holeva M.C."/>
            <person name="Thomson N.R."/>
            <person name="Bentley S.D."/>
            <person name="Churcher L.J.C."/>
            <person name="Mungall K."/>
            <person name="Atkin R."/>
            <person name="Bason N."/>
            <person name="Brooks K."/>
            <person name="Chillingworth T."/>
            <person name="Clark K."/>
            <person name="Doggett J."/>
            <person name="Fraser A."/>
            <person name="Hance Z."/>
            <person name="Hauser H."/>
            <person name="Jagels K."/>
            <person name="Moule S."/>
            <person name="Norbertczak H."/>
            <person name="Ormond D."/>
            <person name="Price C."/>
            <person name="Quail M.A."/>
            <person name="Sanders M."/>
            <person name="Walker D."/>
            <person name="Whitehead S."/>
            <person name="Salmond G.P.C."/>
            <person name="Birch P.R.J."/>
            <person name="Parkhill J."/>
            <person name="Toth I.K."/>
        </authorList>
    </citation>
    <scope>NUCLEOTIDE SEQUENCE [LARGE SCALE GENOMIC DNA]</scope>
    <source>
        <strain>SCRI 1043 / ATCC BAA-672</strain>
    </source>
</reference>
<comment type="function">
    <text evidence="1">Transfers the 4'-phosphopantetheine moiety from coenzyme A to a Ser of acyl-carrier-protein.</text>
</comment>
<comment type="catalytic activity">
    <reaction evidence="1">
        <text>apo-[ACP] + CoA = holo-[ACP] + adenosine 3',5'-bisphosphate + H(+)</text>
        <dbReference type="Rhea" id="RHEA:12068"/>
        <dbReference type="Rhea" id="RHEA-COMP:9685"/>
        <dbReference type="Rhea" id="RHEA-COMP:9690"/>
        <dbReference type="ChEBI" id="CHEBI:15378"/>
        <dbReference type="ChEBI" id="CHEBI:29999"/>
        <dbReference type="ChEBI" id="CHEBI:57287"/>
        <dbReference type="ChEBI" id="CHEBI:58343"/>
        <dbReference type="ChEBI" id="CHEBI:64479"/>
        <dbReference type="EC" id="2.7.8.7"/>
    </reaction>
</comment>
<comment type="cofactor">
    <cofactor evidence="1">
        <name>Mg(2+)</name>
        <dbReference type="ChEBI" id="CHEBI:18420"/>
    </cofactor>
</comment>
<comment type="subcellular location">
    <subcellularLocation>
        <location evidence="1">Cytoplasm</location>
    </subcellularLocation>
</comment>
<comment type="similarity">
    <text evidence="1">Belongs to the P-Pant transferase superfamily. AcpS family.</text>
</comment>
<gene>
    <name evidence="1" type="primary">acpS</name>
    <name type="ordered locus">ECA3274</name>
</gene>
<organism>
    <name type="scientific">Pectobacterium atrosepticum (strain SCRI 1043 / ATCC BAA-672)</name>
    <name type="common">Erwinia carotovora subsp. atroseptica</name>
    <dbReference type="NCBI Taxonomy" id="218491"/>
    <lineage>
        <taxon>Bacteria</taxon>
        <taxon>Pseudomonadati</taxon>
        <taxon>Pseudomonadota</taxon>
        <taxon>Gammaproteobacteria</taxon>
        <taxon>Enterobacterales</taxon>
        <taxon>Pectobacteriaceae</taxon>
        <taxon>Pectobacterium</taxon>
    </lineage>
</organism>
<proteinExistence type="inferred from homology"/>
<dbReference type="EC" id="2.7.8.7" evidence="1"/>
<dbReference type="EMBL" id="BX950851">
    <property type="protein sequence ID" value="CAG76172.1"/>
    <property type="molecule type" value="Genomic_DNA"/>
</dbReference>
<dbReference type="RefSeq" id="WP_011094792.1">
    <property type="nucleotide sequence ID" value="NC_004547.2"/>
</dbReference>
<dbReference type="SMR" id="Q6D222"/>
<dbReference type="STRING" id="218491.ECA3274"/>
<dbReference type="GeneID" id="57209957"/>
<dbReference type="KEGG" id="eca:ECA3274"/>
<dbReference type="eggNOG" id="COG0736">
    <property type="taxonomic scope" value="Bacteria"/>
</dbReference>
<dbReference type="HOGENOM" id="CLU_089696_3_1_6"/>
<dbReference type="OrthoDB" id="517356at2"/>
<dbReference type="Proteomes" id="UP000007966">
    <property type="component" value="Chromosome"/>
</dbReference>
<dbReference type="GO" id="GO:0005737">
    <property type="term" value="C:cytoplasm"/>
    <property type="evidence" value="ECO:0007669"/>
    <property type="project" value="UniProtKB-SubCell"/>
</dbReference>
<dbReference type="GO" id="GO:0008897">
    <property type="term" value="F:holo-[acyl-carrier-protein] synthase activity"/>
    <property type="evidence" value="ECO:0007669"/>
    <property type="project" value="UniProtKB-UniRule"/>
</dbReference>
<dbReference type="GO" id="GO:0000287">
    <property type="term" value="F:magnesium ion binding"/>
    <property type="evidence" value="ECO:0007669"/>
    <property type="project" value="UniProtKB-UniRule"/>
</dbReference>
<dbReference type="GO" id="GO:0006633">
    <property type="term" value="P:fatty acid biosynthetic process"/>
    <property type="evidence" value="ECO:0007669"/>
    <property type="project" value="UniProtKB-UniRule"/>
</dbReference>
<dbReference type="FunFam" id="3.90.470.20:FF:000001">
    <property type="entry name" value="Holo-[acyl-carrier-protein] synthase"/>
    <property type="match status" value="1"/>
</dbReference>
<dbReference type="Gene3D" id="3.90.470.20">
    <property type="entry name" value="4'-phosphopantetheinyl transferase domain"/>
    <property type="match status" value="1"/>
</dbReference>
<dbReference type="HAMAP" id="MF_00101">
    <property type="entry name" value="AcpS"/>
    <property type="match status" value="1"/>
</dbReference>
<dbReference type="InterPro" id="IPR008278">
    <property type="entry name" value="4-PPantetheinyl_Trfase_dom"/>
</dbReference>
<dbReference type="InterPro" id="IPR037143">
    <property type="entry name" value="4-PPantetheinyl_Trfase_dom_sf"/>
</dbReference>
<dbReference type="InterPro" id="IPR002582">
    <property type="entry name" value="ACPS"/>
</dbReference>
<dbReference type="InterPro" id="IPR004568">
    <property type="entry name" value="Ppantetheine-prot_Trfase_dom"/>
</dbReference>
<dbReference type="NCBIfam" id="TIGR00516">
    <property type="entry name" value="acpS"/>
    <property type="match status" value="1"/>
</dbReference>
<dbReference type="NCBIfam" id="TIGR00556">
    <property type="entry name" value="pantethn_trn"/>
    <property type="match status" value="1"/>
</dbReference>
<dbReference type="Pfam" id="PF01648">
    <property type="entry name" value="ACPS"/>
    <property type="match status" value="1"/>
</dbReference>
<dbReference type="SUPFAM" id="SSF56214">
    <property type="entry name" value="4'-phosphopantetheinyl transferase"/>
    <property type="match status" value="1"/>
</dbReference>
<name>ACPS_PECAS</name>
<protein>
    <recommendedName>
        <fullName evidence="1">Holo-[acyl-carrier-protein] synthase</fullName>
        <shortName evidence="1">Holo-ACP synthase</shortName>
        <ecNumber evidence="1">2.7.8.7</ecNumber>
    </recommendedName>
    <alternativeName>
        <fullName evidence="1">4'-phosphopantetheinyl transferase AcpS</fullName>
    </alternativeName>
</protein>
<sequence length="126" mass="14183">MAILGLGTDIVEIARIEVVIERSGERLARRILTDAEWAHYQQHQQPVRFLAKRFAVKEAAAKAFGTGIRNGLAFNQFEVFNDELGKPCLRFFAKAAELAEQMGVRHVHVTLADERRYACATVIIES</sequence>